<name>S17A9_HUMAN</name>
<sequence>MQPPPDEARRDMAGDTQWSRPECQAWTGTLLLGTCLLYCARSSMPICTVSMSQDFGWNKKEAGIVLSSFFWGYCLTQVVGGHLGDRIGGEKVILLSASAWGSITAVTPLLAHLSSAHLAFMTFSRILMGLLQGVYFPALTSLLSQKVRESERAFTYSIVGAGSQFGTLLTGAVGSLLLEWYGWQSIFYFSGGLTLLWVWYVYRYLLSEKDLILALGVLAQSRPVSRHNRVPWRRLFRKPAVWAAVVSQLSAACSFFILLSWLPTFFEETFPDAKGWIFNVVPWLVAIPASLFSGFLSDHLINQGYRAITVRKLMQGMGLGLSSVFALCLGHTSSFCESVVFASASIGLQTFNHSGISVNIQDLAPSCAGFLFGVANTAGALAGVVGVCLGGYLMETTGSWTCLFNLVAIISNLGLCTFLVFGQAQRVDLSSTHEDL</sequence>
<proteinExistence type="evidence at protein level"/>
<organism>
    <name type="scientific">Homo sapiens</name>
    <name type="common">Human</name>
    <dbReference type="NCBI Taxonomy" id="9606"/>
    <lineage>
        <taxon>Eukaryota</taxon>
        <taxon>Metazoa</taxon>
        <taxon>Chordata</taxon>
        <taxon>Craniata</taxon>
        <taxon>Vertebrata</taxon>
        <taxon>Euteleostomi</taxon>
        <taxon>Mammalia</taxon>
        <taxon>Eutheria</taxon>
        <taxon>Euarchontoglires</taxon>
        <taxon>Primates</taxon>
        <taxon>Haplorrhini</taxon>
        <taxon>Catarrhini</taxon>
        <taxon>Hominidae</taxon>
        <taxon>Homo</taxon>
    </lineage>
</organism>
<accession>Q9BYT1</accession>
<accession>B3KTF2</accession>
<accession>Q5W198</accession>
<accession>Q8TB07</accession>
<accession>Q8TBP4</accession>
<accession>Q8TEL5</accession>
<accession>Q9BYT0</accession>
<accession>Q9BYT2</accession>
<reference key="1">
    <citation type="journal article" date="2008" name="Proc. Natl. Acad. Sci. U.S.A.">
        <title>Identification of a vesicular nucleotide transporter.</title>
        <authorList>
            <person name="Sawada K."/>
            <person name="Echigo N."/>
            <person name="Juge N."/>
            <person name="Miyaji T."/>
            <person name="Otsuka M."/>
            <person name="Omote H."/>
            <person name="Yamamoto A."/>
            <person name="Moriyama Y."/>
        </authorList>
    </citation>
    <scope>NUCLEOTIDE SEQUENCE [MRNA] (ISOFORM 2)</scope>
    <scope>FUNCTION</scope>
    <scope>TRANSPORTER ACTIVITY</scope>
    <scope>ACTIVITY REGULATION</scope>
    <scope>TISSUE SPECIFICITY</scope>
    <scope>VARIANT SER-228</scope>
</reference>
<reference key="2">
    <citation type="journal article" date="2003" name="DNA Res.">
        <title>Characterization of long cDNA clones from human adult spleen. II. The complete sequences of 81 cDNA clones.</title>
        <authorList>
            <person name="Jikuya H."/>
            <person name="Takano J."/>
            <person name="Kikuno R."/>
            <person name="Hirosawa M."/>
            <person name="Nagase T."/>
            <person name="Nomura N."/>
            <person name="Ohara O."/>
        </authorList>
    </citation>
    <scope>NUCLEOTIDE SEQUENCE [LARGE SCALE MRNA] (ISOFORM 3)</scope>
    <source>
        <tissue>Spleen</tissue>
    </source>
</reference>
<reference key="3">
    <citation type="journal article" date="2004" name="Nat. Genet.">
        <title>Complete sequencing and characterization of 21,243 full-length human cDNAs.</title>
        <authorList>
            <person name="Ota T."/>
            <person name="Suzuki Y."/>
            <person name="Nishikawa T."/>
            <person name="Otsuki T."/>
            <person name="Sugiyama T."/>
            <person name="Irie R."/>
            <person name="Wakamatsu A."/>
            <person name="Hayashi K."/>
            <person name="Sato H."/>
            <person name="Nagai K."/>
            <person name="Kimura K."/>
            <person name="Makita H."/>
            <person name="Sekine M."/>
            <person name="Obayashi M."/>
            <person name="Nishi T."/>
            <person name="Shibahara T."/>
            <person name="Tanaka T."/>
            <person name="Ishii S."/>
            <person name="Yamamoto J."/>
            <person name="Saito K."/>
            <person name="Kawai Y."/>
            <person name="Isono Y."/>
            <person name="Nakamura Y."/>
            <person name="Nagahari K."/>
            <person name="Murakami K."/>
            <person name="Yasuda T."/>
            <person name="Iwayanagi T."/>
            <person name="Wagatsuma M."/>
            <person name="Shiratori A."/>
            <person name="Sudo H."/>
            <person name="Hosoiri T."/>
            <person name="Kaku Y."/>
            <person name="Kodaira H."/>
            <person name="Kondo H."/>
            <person name="Sugawara M."/>
            <person name="Takahashi M."/>
            <person name="Kanda K."/>
            <person name="Yokoi T."/>
            <person name="Furuya T."/>
            <person name="Kikkawa E."/>
            <person name="Omura Y."/>
            <person name="Abe K."/>
            <person name="Kamihara K."/>
            <person name="Katsuta N."/>
            <person name="Sato K."/>
            <person name="Tanikawa M."/>
            <person name="Yamazaki M."/>
            <person name="Ninomiya K."/>
            <person name="Ishibashi T."/>
            <person name="Yamashita H."/>
            <person name="Murakawa K."/>
            <person name="Fujimori K."/>
            <person name="Tanai H."/>
            <person name="Kimata M."/>
            <person name="Watanabe M."/>
            <person name="Hiraoka S."/>
            <person name="Chiba Y."/>
            <person name="Ishida S."/>
            <person name="Ono Y."/>
            <person name="Takiguchi S."/>
            <person name="Watanabe S."/>
            <person name="Yosida M."/>
            <person name="Hotuta T."/>
            <person name="Kusano J."/>
            <person name="Kanehori K."/>
            <person name="Takahashi-Fujii A."/>
            <person name="Hara H."/>
            <person name="Tanase T.-O."/>
            <person name="Nomura Y."/>
            <person name="Togiya S."/>
            <person name="Komai F."/>
            <person name="Hara R."/>
            <person name="Takeuchi K."/>
            <person name="Arita M."/>
            <person name="Imose N."/>
            <person name="Musashino K."/>
            <person name="Yuuki H."/>
            <person name="Oshima A."/>
            <person name="Sasaki N."/>
            <person name="Aotsuka S."/>
            <person name="Yoshikawa Y."/>
            <person name="Matsunawa H."/>
            <person name="Ichihara T."/>
            <person name="Shiohata N."/>
            <person name="Sano S."/>
            <person name="Moriya S."/>
            <person name="Momiyama H."/>
            <person name="Satoh N."/>
            <person name="Takami S."/>
            <person name="Terashima Y."/>
            <person name="Suzuki O."/>
            <person name="Nakagawa S."/>
            <person name="Senoh A."/>
            <person name="Mizoguchi H."/>
            <person name="Goto Y."/>
            <person name="Shimizu F."/>
            <person name="Wakebe H."/>
            <person name="Hishigaki H."/>
            <person name="Watanabe T."/>
            <person name="Sugiyama A."/>
            <person name="Takemoto M."/>
            <person name="Kawakami B."/>
            <person name="Yamazaki M."/>
            <person name="Watanabe K."/>
            <person name="Kumagai A."/>
            <person name="Itakura S."/>
            <person name="Fukuzumi Y."/>
            <person name="Fujimori Y."/>
            <person name="Komiyama M."/>
            <person name="Tashiro H."/>
            <person name="Tanigami A."/>
            <person name="Fujiwara T."/>
            <person name="Ono T."/>
            <person name="Yamada K."/>
            <person name="Fujii Y."/>
            <person name="Ozaki K."/>
            <person name="Hirao M."/>
            <person name="Ohmori Y."/>
            <person name="Kawabata A."/>
            <person name="Hikiji T."/>
            <person name="Kobatake N."/>
            <person name="Inagaki H."/>
            <person name="Ikema Y."/>
            <person name="Okamoto S."/>
            <person name="Okitani R."/>
            <person name="Kawakami T."/>
            <person name="Noguchi S."/>
            <person name="Itoh T."/>
            <person name="Shigeta K."/>
            <person name="Senba T."/>
            <person name="Matsumura K."/>
            <person name="Nakajima Y."/>
            <person name="Mizuno T."/>
            <person name="Morinaga M."/>
            <person name="Sasaki M."/>
            <person name="Togashi T."/>
            <person name="Oyama M."/>
            <person name="Hata H."/>
            <person name="Watanabe M."/>
            <person name="Komatsu T."/>
            <person name="Mizushima-Sugano J."/>
            <person name="Satoh T."/>
            <person name="Shirai Y."/>
            <person name="Takahashi Y."/>
            <person name="Nakagawa K."/>
            <person name="Okumura K."/>
            <person name="Nagase T."/>
            <person name="Nomura N."/>
            <person name="Kikuchi H."/>
            <person name="Masuho Y."/>
            <person name="Yamashita R."/>
            <person name="Nakai K."/>
            <person name="Yada T."/>
            <person name="Nakamura Y."/>
            <person name="Ohara O."/>
            <person name="Isogai T."/>
            <person name="Sugano S."/>
        </authorList>
    </citation>
    <scope>NUCLEOTIDE SEQUENCE [LARGE SCALE MRNA] (ISOFORM 1)</scope>
    <scope>VARIANT SER-228</scope>
    <source>
        <tissue>Neonatal skin</tissue>
    </source>
</reference>
<reference key="4">
    <citation type="journal article" date="2001" name="Nature">
        <title>The DNA sequence and comparative analysis of human chromosome 20.</title>
        <authorList>
            <person name="Deloukas P."/>
            <person name="Matthews L.H."/>
            <person name="Ashurst J.L."/>
            <person name="Burton J."/>
            <person name="Gilbert J.G.R."/>
            <person name="Jones M."/>
            <person name="Stavrides G."/>
            <person name="Almeida J.P."/>
            <person name="Babbage A.K."/>
            <person name="Bagguley C.L."/>
            <person name="Bailey J."/>
            <person name="Barlow K.F."/>
            <person name="Bates K.N."/>
            <person name="Beard L.M."/>
            <person name="Beare D.M."/>
            <person name="Beasley O.P."/>
            <person name="Bird C.P."/>
            <person name="Blakey S.E."/>
            <person name="Bridgeman A.M."/>
            <person name="Brown A.J."/>
            <person name="Buck D."/>
            <person name="Burrill W.D."/>
            <person name="Butler A.P."/>
            <person name="Carder C."/>
            <person name="Carter N.P."/>
            <person name="Chapman J.C."/>
            <person name="Clamp M."/>
            <person name="Clark G."/>
            <person name="Clark L.N."/>
            <person name="Clark S.Y."/>
            <person name="Clee C.M."/>
            <person name="Clegg S."/>
            <person name="Cobley V.E."/>
            <person name="Collier R.E."/>
            <person name="Connor R.E."/>
            <person name="Corby N.R."/>
            <person name="Coulson A."/>
            <person name="Coville G.J."/>
            <person name="Deadman R."/>
            <person name="Dhami P.D."/>
            <person name="Dunn M."/>
            <person name="Ellington A.G."/>
            <person name="Frankland J.A."/>
            <person name="Fraser A."/>
            <person name="French L."/>
            <person name="Garner P."/>
            <person name="Grafham D.V."/>
            <person name="Griffiths C."/>
            <person name="Griffiths M.N.D."/>
            <person name="Gwilliam R."/>
            <person name="Hall R.E."/>
            <person name="Hammond S."/>
            <person name="Harley J.L."/>
            <person name="Heath P.D."/>
            <person name="Ho S."/>
            <person name="Holden J.L."/>
            <person name="Howden P.J."/>
            <person name="Huckle E."/>
            <person name="Hunt A.R."/>
            <person name="Hunt S.E."/>
            <person name="Jekosch K."/>
            <person name="Johnson C.M."/>
            <person name="Johnson D."/>
            <person name="Kay M.P."/>
            <person name="Kimberley A.M."/>
            <person name="King A."/>
            <person name="Knights A."/>
            <person name="Laird G.K."/>
            <person name="Lawlor S."/>
            <person name="Lehvaeslaiho M.H."/>
            <person name="Leversha M.A."/>
            <person name="Lloyd C."/>
            <person name="Lloyd D.M."/>
            <person name="Lovell J.D."/>
            <person name="Marsh V.L."/>
            <person name="Martin S.L."/>
            <person name="McConnachie L.J."/>
            <person name="McLay K."/>
            <person name="McMurray A.A."/>
            <person name="Milne S.A."/>
            <person name="Mistry D."/>
            <person name="Moore M.J.F."/>
            <person name="Mullikin J.C."/>
            <person name="Nickerson T."/>
            <person name="Oliver K."/>
            <person name="Parker A."/>
            <person name="Patel R."/>
            <person name="Pearce T.A.V."/>
            <person name="Peck A.I."/>
            <person name="Phillimore B.J.C.T."/>
            <person name="Prathalingam S.R."/>
            <person name="Plumb R.W."/>
            <person name="Ramsay H."/>
            <person name="Rice C.M."/>
            <person name="Ross M.T."/>
            <person name="Scott C.E."/>
            <person name="Sehra H.K."/>
            <person name="Shownkeen R."/>
            <person name="Sims S."/>
            <person name="Skuce C.D."/>
            <person name="Smith M.L."/>
            <person name="Soderlund C."/>
            <person name="Steward C.A."/>
            <person name="Sulston J.E."/>
            <person name="Swann R.M."/>
            <person name="Sycamore N."/>
            <person name="Taylor R."/>
            <person name="Tee L."/>
            <person name="Thomas D.W."/>
            <person name="Thorpe A."/>
            <person name="Tracey A."/>
            <person name="Tromans A.C."/>
            <person name="Vaudin M."/>
            <person name="Wall M."/>
            <person name="Wallis J.M."/>
            <person name="Whitehead S.L."/>
            <person name="Whittaker P."/>
            <person name="Willey D.L."/>
            <person name="Williams L."/>
            <person name="Williams S.A."/>
            <person name="Wilming L."/>
            <person name="Wray P.W."/>
            <person name="Hubbard T."/>
            <person name="Durbin R.M."/>
            <person name="Bentley D.R."/>
            <person name="Beck S."/>
            <person name="Rogers J."/>
        </authorList>
    </citation>
    <scope>NUCLEOTIDE SEQUENCE [LARGE SCALE GENOMIC DNA]</scope>
</reference>
<reference key="5">
    <citation type="journal article" date="2004" name="Genome Res.">
        <title>The status, quality, and expansion of the NIH full-length cDNA project: the Mammalian Gene Collection (MGC).</title>
        <authorList>
            <consortium name="The MGC Project Team"/>
        </authorList>
    </citation>
    <scope>NUCLEOTIDE SEQUENCE [LARGE SCALE MRNA] (ISOFORMS 1 AND 2)</scope>
    <scope>VARIANT SER-228</scope>
    <source>
        <tissue>Kidney</tissue>
    </source>
</reference>
<reference key="6">
    <citation type="journal article" date="2013" name="Am. J. Physiol.">
        <title>Vesicular nucleotide transporter regulates the nucleotide content in airway epithelial mucin granules.</title>
        <authorList>
            <person name="Sesma J.I."/>
            <person name="Kreda S.M."/>
            <person name="Okada S.F."/>
            <person name="van Heusden C."/>
            <person name="Moussa L."/>
            <person name="Jones L.C."/>
            <person name="O'Neal W.K."/>
            <person name="Togawa N."/>
            <person name="Hiasa M."/>
            <person name="Moriyama Y."/>
            <person name="Lazarowski E.R."/>
        </authorList>
    </citation>
    <scope>FUNCTION</scope>
    <scope>TRANSPORTER ACTIVITY</scope>
    <scope>SUBCELLULAR LOCATION</scope>
</reference>
<reference key="7">
    <citation type="journal article" date="2022" name="Cells">
        <title>Lysosomal ATP Transporter SLC17A9 Controls Cell Viability via Regulating Cathepsin D.</title>
        <authorList>
            <person name="Huang P."/>
            <person name="Cao Q."/>
            <person name="Xu M."/>
            <person name="Dong X.P."/>
        </authorList>
    </citation>
    <scope>FUNCTION</scope>
</reference>
<reference key="8">
    <citation type="journal article" date="2014" name="J. Med. Genet.">
        <title>Exome sequencing identifies SLC17A9 pathogenic gene in two Chinese pedigrees with disseminated superficial actinic porokeratosis.</title>
        <authorList>
            <person name="Cui H."/>
            <person name="Li L."/>
            <person name="Wang W."/>
            <person name="Shen J."/>
            <person name="Yue Z."/>
            <person name="Zheng X."/>
            <person name="Zuo X."/>
            <person name="Liang B."/>
            <person name="Gao M."/>
            <person name="Fan X."/>
            <person name="Yin X."/>
            <person name="Shen C."/>
            <person name="Yang C."/>
            <person name="Zhang C."/>
            <person name="Zhang X."/>
            <person name="Sheng Y."/>
            <person name="Gao J."/>
            <person name="Zhu Z."/>
            <person name="Lin D."/>
            <person name="Zhang A."/>
            <person name="Wang Z."/>
            <person name="Liu S."/>
            <person name="Sun L."/>
            <person name="Yang S."/>
            <person name="Cui Y."/>
            <person name="Zhang X."/>
        </authorList>
    </citation>
    <scope>INVOLVEMENT IN POROK8</scope>
    <scope>VARIANTS POROK8 CYS-9 AND GLN-311</scope>
</reference>
<gene>
    <name evidence="11 15" type="primary">SLC17A9</name>
    <name evidence="15" type="synonym">C20orf59</name>
</gene>
<dbReference type="EMBL" id="AK074107">
    <property type="protein sequence ID" value="BAB84933.1"/>
    <property type="status" value="ALT_INIT"/>
    <property type="molecule type" value="mRNA"/>
</dbReference>
<dbReference type="EMBL" id="AK095473">
    <property type="protein sequence ID" value="BAG53064.1"/>
    <property type="molecule type" value="mRNA"/>
</dbReference>
<dbReference type="EMBL" id="AL121673">
    <property type="status" value="NOT_ANNOTATED_CDS"/>
    <property type="molecule type" value="Genomic_DNA"/>
</dbReference>
<dbReference type="EMBL" id="BC025312">
    <property type="protein sequence ID" value="AAH25312.1"/>
    <property type="status" value="ALT_SEQ"/>
    <property type="molecule type" value="mRNA"/>
</dbReference>
<dbReference type="EMBL" id="BC027447">
    <property type="protein sequence ID" value="AAH27447.1"/>
    <property type="molecule type" value="mRNA"/>
</dbReference>
<dbReference type="EMBL" id="BC038593">
    <property type="status" value="NOT_ANNOTATED_CDS"/>
    <property type="molecule type" value="mRNA"/>
</dbReference>
<dbReference type="CCDS" id="CCDS42901.1">
    <molecule id="Q9BYT1-1"/>
</dbReference>
<dbReference type="CCDS" id="CCDS77600.1">
    <molecule id="Q9BYT1-2"/>
</dbReference>
<dbReference type="RefSeq" id="NP_001289572.2">
    <molecule id="Q9BYT1-2"/>
    <property type="nucleotide sequence ID" value="NM_001302643.2"/>
</dbReference>
<dbReference type="RefSeq" id="NP_071365.3">
    <molecule id="Q9BYT1-1"/>
    <property type="nucleotide sequence ID" value="NM_022082.3"/>
</dbReference>
<dbReference type="SMR" id="Q9BYT1"/>
<dbReference type="BioGRID" id="121984">
    <property type="interactions" value="7"/>
</dbReference>
<dbReference type="FunCoup" id="Q9BYT1">
    <property type="interactions" value="50"/>
</dbReference>
<dbReference type="IntAct" id="Q9BYT1">
    <property type="interactions" value="7"/>
</dbReference>
<dbReference type="STRING" id="9606.ENSP00000359376"/>
<dbReference type="DrugCentral" id="Q9BYT1"/>
<dbReference type="GuidetoPHARMACOLOGY" id="1010"/>
<dbReference type="TCDB" id="2.A.1.14.21">
    <property type="family name" value="the major facilitator superfamily (mfs)"/>
</dbReference>
<dbReference type="GlyGen" id="Q9BYT1">
    <property type="glycosylation" value="1 site"/>
</dbReference>
<dbReference type="iPTMnet" id="Q9BYT1"/>
<dbReference type="PhosphoSitePlus" id="Q9BYT1"/>
<dbReference type="BioMuta" id="SLC17A9"/>
<dbReference type="DMDM" id="47605540"/>
<dbReference type="PaxDb" id="9606-ENSP00000359376"/>
<dbReference type="PeptideAtlas" id="Q9BYT1"/>
<dbReference type="ProteomicsDB" id="79701">
    <molecule id="Q9BYT1-1"/>
</dbReference>
<dbReference type="ProteomicsDB" id="79702">
    <molecule id="Q9BYT1-2"/>
</dbReference>
<dbReference type="Antibodypedia" id="66400">
    <property type="antibodies" value="22 antibodies from 8 providers"/>
</dbReference>
<dbReference type="DNASU" id="63910"/>
<dbReference type="Ensembl" id="ENST00000370349.7">
    <molecule id="Q9BYT1-2"/>
    <property type="protein sequence ID" value="ENSP00000359374.3"/>
    <property type="gene ID" value="ENSG00000101194.18"/>
</dbReference>
<dbReference type="Ensembl" id="ENST00000370351.9">
    <molecule id="Q9BYT1-1"/>
    <property type="protein sequence ID" value="ENSP00000359376.4"/>
    <property type="gene ID" value="ENSG00000101194.18"/>
</dbReference>
<dbReference type="GeneID" id="63910"/>
<dbReference type="KEGG" id="hsa:63910"/>
<dbReference type="MANE-Select" id="ENST00000370351.9">
    <property type="protein sequence ID" value="ENSP00000359376.4"/>
    <property type="RefSeq nucleotide sequence ID" value="NM_022082.4"/>
    <property type="RefSeq protein sequence ID" value="NP_071365.4"/>
</dbReference>
<dbReference type="UCSC" id="uc002ydz.5">
    <molecule id="Q9BYT1-1"/>
    <property type="organism name" value="human"/>
</dbReference>
<dbReference type="AGR" id="HGNC:16192"/>
<dbReference type="CTD" id="63910"/>
<dbReference type="DisGeNET" id="63910"/>
<dbReference type="GeneCards" id="SLC17A9"/>
<dbReference type="HGNC" id="HGNC:16192">
    <property type="gene designation" value="SLC17A9"/>
</dbReference>
<dbReference type="HPA" id="ENSG00000101194">
    <property type="expression patterns" value="Tissue enhanced (liver)"/>
</dbReference>
<dbReference type="MalaCards" id="SLC17A9"/>
<dbReference type="MIM" id="612107">
    <property type="type" value="gene"/>
</dbReference>
<dbReference type="MIM" id="616063">
    <property type="type" value="phenotype"/>
</dbReference>
<dbReference type="neXtProt" id="NX_Q9BYT1"/>
<dbReference type="OpenTargets" id="ENSG00000101194"/>
<dbReference type="Orphanet" id="79152">
    <property type="disease" value="Disseminated superficial actinic porokeratosis"/>
</dbReference>
<dbReference type="PharmGKB" id="PA164725806"/>
<dbReference type="VEuPathDB" id="HostDB:ENSG00000101194"/>
<dbReference type="eggNOG" id="KOG2532">
    <property type="taxonomic scope" value="Eukaryota"/>
</dbReference>
<dbReference type="GeneTree" id="ENSGT00940000158186"/>
<dbReference type="HOGENOM" id="CLU_001265_5_11_1"/>
<dbReference type="InParanoid" id="Q9BYT1"/>
<dbReference type="OMA" id="LITFWMP"/>
<dbReference type="OrthoDB" id="2985014at2759"/>
<dbReference type="PAN-GO" id="Q9BYT1">
    <property type="GO annotations" value="0 GO annotations based on evolutionary models"/>
</dbReference>
<dbReference type="PhylomeDB" id="Q9BYT1"/>
<dbReference type="TreeFam" id="TF313341"/>
<dbReference type="PathwayCommons" id="Q9BYT1"/>
<dbReference type="SignaLink" id="Q9BYT1"/>
<dbReference type="BioGRID-ORCS" id="63910">
    <property type="hits" value="14 hits in 1144 CRISPR screens"/>
</dbReference>
<dbReference type="ChiTaRS" id="SLC17A9">
    <property type="organism name" value="human"/>
</dbReference>
<dbReference type="GenomeRNAi" id="63910"/>
<dbReference type="Pharos" id="Q9BYT1">
    <property type="development level" value="Tchem"/>
</dbReference>
<dbReference type="PRO" id="PR:Q9BYT1"/>
<dbReference type="Proteomes" id="UP000005640">
    <property type="component" value="Chromosome 20"/>
</dbReference>
<dbReference type="RNAct" id="Q9BYT1">
    <property type="molecule type" value="protein"/>
</dbReference>
<dbReference type="Bgee" id="ENSG00000101194">
    <property type="expression patterns" value="Expressed in right lobe of liver and 129 other cell types or tissues"/>
</dbReference>
<dbReference type="ExpressionAtlas" id="Q9BYT1">
    <property type="expression patterns" value="baseline and differential"/>
</dbReference>
<dbReference type="GO" id="GO:0042584">
    <property type="term" value="C:chromaffin granule membrane"/>
    <property type="evidence" value="ECO:0000250"/>
    <property type="project" value="UniProtKB"/>
</dbReference>
<dbReference type="GO" id="GO:0005765">
    <property type="term" value="C:lysosomal membrane"/>
    <property type="evidence" value="ECO:0000250"/>
    <property type="project" value="UniProtKB"/>
</dbReference>
<dbReference type="GO" id="GO:0098594">
    <property type="term" value="C:mucin granule"/>
    <property type="evidence" value="ECO:0000314"/>
    <property type="project" value="UniProtKB"/>
</dbReference>
<dbReference type="GO" id="GO:0030658">
    <property type="term" value="C:transport vesicle membrane"/>
    <property type="evidence" value="ECO:0007669"/>
    <property type="project" value="UniProtKB-SubCell"/>
</dbReference>
<dbReference type="GO" id="GO:0015217">
    <property type="term" value="F:ADP transmembrane transporter activity"/>
    <property type="evidence" value="ECO:0000315"/>
    <property type="project" value="MGI"/>
</dbReference>
<dbReference type="GO" id="GO:0005347">
    <property type="term" value="F:ATP transmembrane transporter activity"/>
    <property type="evidence" value="ECO:0000314"/>
    <property type="project" value="MGI"/>
</dbReference>
<dbReference type="GO" id="GO:0001409">
    <property type="term" value="F:guanine nucleotide transmembrane transporter activity"/>
    <property type="evidence" value="ECO:0000315"/>
    <property type="project" value="MGI"/>
</dbReference>
<dbReference type="GO" id="GO:0160042">
    <property type="term" value="F:purine nucleotide uniporter activity"/>
    <property type="evidence" value="ECO:0000315"/>
    <property type="project" value="UniProtKB"/>
</dbReference>
<dbReference type="GO" id="GO:0015866">
    <property type="term" value="P:ADP transport"/>
    <property type="evidence" value="ECO:0000315"/>
    <property type="project" value="MGI"/>
</dbReference>
<dbReference type="GO" id="GO:1904669">
    <property type="term" value="P:ATP export"/>
    <property type="evidence" value="ECO:0000315"/>
    <property type="project" value="UniProtKB"/>
</dbReference>
<dbReference type="GO" id="GO:0015867">
    <property type="term" value="P:ATP transport"/>
    <property type="evidence" value="ECO:0000314"/>
    <property type="project" value="MGI"/>
</dbReference>
<dbReference type="GO" id="GO:1903790">
    <property type="term" value="P:guanine nucleotide transmembrane transport"/>
    <property type="evidence" value="ECO:0000315"/>
    <property type="project" value="MGI"/>
</dbReference>
<dbReference type="GO" id="GO:1905146">
    <property type="term" value="P:lysosomal protein catabolic process"/>
    <property type="evidence" value="ECO:0007669"/>
    <property type="project" value="Ensembl"/>
</dbReference>
<dbReference type="GO" id="GO:0141013">
    <property type="term" value="P:purine nucleotide import into lysosome"/>
    <property type="evidence" value="ECO:0000250"/>
    <property type="project" value="UniProtKB"/>
</dbReference>
<dbReference type="CDD" id="cd17380">
    <property type="entry name" value="MFS_SLC17A9_like"/>
    <property type="match status" value="1"/>
</dbReference>
<dbReference type="FunFam" id="1.20.1250.20:FF:000059">
    <property type="entry name" value="Solute carrier family 17 member 9"/>
    <property type="match status" value="1"/>
</dbReference>
<dbReference type="FunFam" id="1.20.1250.20:FF:000150">
    <property type="entry name" value="Solute carrier family 17 member 9"/>
    <property type="match status" value="1"/>
</dbReference>
<dbReference type="Gene3D" id="1.20.1250.20">
    <property type="entry name" value="MFS general substrate transporter like domains"/>
    <property type="match status" value="2"/>
</dbReference>
<dbReference type="InterPro" id="IPR011701">
    <property type="entry name" value="MFS"/>
</dbReference>
<dbReference type="InterPro" id="IPR020846">
    <property type="entry name" value="MFS_dom"/>
</dbReference>
<dbReference type="InterPro" id="IPR050382">
    <property type="entry name" value="MFS_Na/Anion_cotransporter"/>
</dbReference>
<dbReference type="InterPro" id="IPR036259">
    <property type="entry name" value="MFS_trans_sf"/>
</dbReference>
<dbReference type="InterPro" id="IPR044777">
    <property type="entry name" value="SLC17A9-like"/>
</dbReference>
<dbReference type="InterPro" id="IPR005829">
    <property type="entry name" value="Sugar_transporter_CS"/>
</dbReference>
<dbReference type="PANTHER" id="PTHR11662">
    <property type="entry name" value="SOLUTE CARRIER FAMILY 17"/>
    <property type="match status" value="1"/>
</dbReference>
<dbReference type="PANTHER" id="PTHR11662:SF279">
    <property type="entry name" value="VOLTAGE-GATED PURINE NUCLEOTIDE UNIPORTER SLC17A9"/>
    <property type="match status" value="1"/>
</dbReference>
<dbReference type="Pfam" id="PF07690">
    <property type="entry name" value="MFS_1"/>
    <property type="match status" value="1"/>
</dbReference>
<dbReference type="SUPFAM" id="SSF103473">
    <property type="entry name" value="MFS general substrate transporter"/>
    <property type="match status" value="1"/>
</dbReference>
<dbReference type="PROSITE" id="PS50850">
    <property type="entry name" value="MFS"/>
    <property type="match status" value="1"/>
</dbReference>
<dbReference type="PROSITE" id="PS00217">
    <property type="entry name" value="SUGAR_TRANSPORT_2"/>
    <property type="match status" value="1"/>
</dbReference>
<feature type="chain" id="PRO_0000084849" description="Voltage-gated purine nucleotide uniporter SLC17A9">
    <location>
        <begin position="1"/>
        <end position="436"/>
    </location>
</feature>
<feature type="transmembrane region" description="Helical" evidence="2">
    <location>
        <begin position="64"/>
        <end position="84"/>
    </location>
</feature>
<feature type="transmembrane region" description="Helical" evidence="2">
    <location>
        <begin position="92"/>
        <end position="112"/>
    </location>
</feature>
<feature type="transmembrane region" description="Helical" evidence="2">
    <location>
        <begin position="118"/>
        <end position="138"/>
    </location>
</feature>
<feature type="transmembrane region" description="Helical" evidence="2">
    <location>
        <begin position="158"/>
        <end position="178"/>
    </location>
</feature>
<feature type="transmembrane region" description="Helical" evidence="2">
    <location>
        <begin position="181"/>
        <end position="201"/>
    </location>
</feature>
<feature type="transmembrane region" description="Helical" evidence="2">
    <location>
        <begin position="239"/>
        <end position="259"/>
    </location>
</feature>
<feature type="transmembrane region" description="Helical" evidence="2">
    <location>
        <begin position="276"/>
        <end position="296"/>
    </location>
</feature>
<feature type="transmembrane region" description="Helical" evidence="2">
    <location>
        <begin position="316"/>
        <end position="336"/>
    </location>
</feature>
<feature type="transmembrane region" description="Helical" evidence="2">
    <location>
        <begin position="369"/>
        <end position="389"/>
    </location>
</feature>
<feature type="transmembrane region" description="Helical" evidence="2">
    <location>
        <begin position="402"/>
        <end position="422"/>
    </location>
</feature>
<feature type="splice variant" id="VSP_010344" description="In isoform 2." evidence="10 11">
    <original>MQPPPDEARRDMAGDTQWS</original>
    <variation>MTLTSRRQDSQEA</variation>
    <location>
        <begin position="1"/>
        <end position="19"/>
    </location>
</feature>
<feature type="splice variant" id="VSP_010345" description="In isoform 3." evidence="9">
    <original>DLILALG</original>
    <variation>GNAGRAG</variation>
    <location>
        <begin position="210"/>
        <end position="216"/>
    </location>
</feature>
<feature type="splice variant" id="VSP_010346" description="In isoform 3." evidence="9">
    <location>
        <begin position="217"/>
        <end position="436"/>
    </location>
</feature>
<feature type="sequence variant" id="VAR_071983" description="In POROK8; dbSNP:rs548728088." evidence="7">
    <original>R</original>
    <variation>C</variation>
    <location>
        <position position="9"/>
    </location>
</feature>
<feature type="sequence variant" id="VAR_055326" description="In dbSNP:rs2427463." evidence="3 4 5">
    <original>N</original>
    <variation>S</variation>
    <location>
        <position position="228"/>
    </location>
</feature>
<feature type="sequence variant" id="VAR_071984" description="In POROK8; dbSNP:rs606231251." evidence="7">
    <original>R</original>
    <variation>Q</variation>
    <location>
        <position position="311"/>
    </location>
</feature>
<feature type="sequence variant" id="VAR_056128" description="In dbSNP:rs7271712.">
    <original>T</original>
    <variation>M</variation>
    <location>
        <position position="397"/>
    </location>
</feature>
<feature type="sequence conflict" description="In Ref. 1." evidence="13" ref="1">
    <original>E</original>
    <variation>K</variation>
    <location>
        <position position="395"/>
    </location>
</feature>
<evidence type="ECO:0000250" key="1">
    <source>
        <dbReference type="UniProtKB" id="Q8VCL5"/>
    </source>
</evidence>
<evidence type="ECO:0000255" key="2"/>
<evidence type="ECO:0000269" key="3">
    <source>
    </source>
</evidence>
<evidence type="ECO:0000269" key="4">
    <source>
    </source>
</evidence>
<evidence type="ECO:0000269" key="5">
    <source>
    </source>
</evidence>
<evidence type="ECO:0000269" key="6">
    <source>
    </source>
</evidence>
<evidence type="ECO:0000269" key="7">
    <source>
    </source>
</evidence>
<evidence type="ECO:0000269" key="8">
    <source>
    </source>
</evidence>
<evidence type="ECO:0000303" key="9">
    <source>
    </source>
</evidence>
<evidence type="ECO:0000303" key="10">
    <source>
    </source>
</evidence>
<evidence type="ECO:0000303" key="11">
    <source>
    </source>
</evidence>
<evidence type="ECO:0000303" key="12">
    <source>
    </source>
</evidence>
<evidence type="ECO:0000305" key="13"/>
<evidence type="ECO:0000305" key="14">
    <source>
    </source>
</evidence>
<evidence type="ECO:0000312" key="15">
    <source>
        <dbReference type="HGNC" id="HGNC:16192"/>
    </source>
</evidence>
<protein>
    <recommendedName>
        <fullName evidence="14">Voltage-gated purine nucleotide uniporter SLC17A9</fullName>
    </recommendedName>
    <alternativeName>
        <fullName evidence="15">Solute carrier family 17 member 9</fullName>
    </alternativeName>
    <alternativeName>
        <fullName evidence="11">Vesicular nucleotide transporter</fullName>
        <shortName evidence="11">VNUT</shortName>
    </alternativeName>
</protein>
<comment type="function">
    <text evidence="5 6 8">Voltage-gated ATP nucleotide uniporter that can also transport the purine nucleotides ADP and GTP. Uses the membrane potential as the driving force to control ATP accumulation in lysosomes and secretory vesicles (PubMed:18375752, PubMed:23467297). By controlling ATP storage in lysosomes, regulates ATP-dependent proteins of these organelles (PubMed:35269509). Also indirectly regulates the exocytosis of ATP through its import into lysosomes in astrocytes and secretory vesicles such as adrenal chromaffin granules, mucin granules and synaptic vesicles (PubMed:18375752, PubMed:23467297).</text>
</comment>
<comment type="catalytic activity">
    <reaction evidence="5 6">
        <text>ATP(in) = ATP(out)</text>
        <dbReference type="Rhea" id="RHEA:75687"/>
        <dbReference type="ChEBI" id="CHEBI:30616"/>
    </reaction>
</comment>
<comment type="catalytic activity">
    <reaction evidence="5 6">
        <text>ADP(in) = ADP(out)</text>
        <dbReference type="Rhea" id="RHEA:75783"/>
        <dbReference type="ChEBI" id="CHEBI:456216"/>
    </reaction>
</comment>
<comment type="catalytic activity">
    <reaction evidence="5">
        <text>GTP(in) = GTP(out)</text>
        <dbReference type="Rhea" id="RHEA:75787"/>
        <dbReference type="ChEBI" id="CHEBI:37565"/>
    </reaction>
</comment>
<comment type="activity regulation">
    <text evidence="5">Activity is chloride-dependent (PubMed:18375752). Inhibited by AMP-PNP, gammaS-ATP, diadenosine triphosphate, 4,4'- diisothiocyanatostilbene-2,2'-disulfonate (DIDS) and Evans blue (PubMed:18375752).</text>
</comment>
<comment type="interaction">
    <interactant intactId="EBI-3940816">
        <id>Q9BYT1</id>
    </interactant>
    <interactant intactId="EBI-517508">
        <id>Q9NR28</id>
        <label>DIABLO</label>
    </interactant>
    <organismsDiffer>false</organismsDiffer>
    <experiments>3</experiments>
</comment>
<comment type="interaction">
    <interactant intactId="EBI-3940816">
        <id>Q9BYT1</id>
    </interactant>
    <interactant intactId="EBI-7825321">
        <id>Q96E29</id>
        <label>MTERF3</label>
    </interactant>
    <organismsDiffer>false</organismsDiffer>
    <experiments>3</experiments>
</comment>
<comment type="interaction">
    <interactant intactId="EBI-3940816">
        <id>Q9BYT1</id>
    </interactant>
    <interactant intactId="EBI-709754">
        <id>Q9HB07</id>
        <label>MYG1</label>
    </interactant>
    <organismsDiffer>false</organismsDiffer>
    <experiments>3</experiments>
</comment>
<comment type="interaction">
    <interactant intactId="EBI-3940816">
        <id>Q9BYT1</id>
    </interactant>
    <interactant intactId="EBI-745846">
        <id>P57086</id>
        <label>SCAND1</label>
    </interactant>
    <organismsDiffer>false</organismsDiffer>
    <experiments>3</experiments>
</comment>
<comment type="interaction">
    <interactant intactId="EBI-3940816">
        <id>Q9BYT1</id>
    </interactant>
    <interactant intactId="EBI-2872322">
        <id>Q9H0W8</id>
        <label>SMG9</label>
    </interactant>
    <organismsDiffer>false</organismsDiffer>
    <experiments>3</experiments>
</comment>
<comment type="interaction">
    <interactant intactId="EBI-3940816">
        <id>Q9BYT1</id>
    </interactant>
    <interactant intactId="EBI-1045099">
        <id>Q9BW92</id>
        <label>TARS2</label>
    </interactant>
    <organismsDiffer>false</organismsDiffer>
    <experiments>3</experiments>
</comment>
<comment type="subcellular location">
    <subcellularLocation>
        <location evidence="1">Cytoplasmic vesicle</location>
        <location evidence="1">Secretory vesicle</location>
        <location evidence="1">Chromaffin granule membrane</location>
        <topology evidence="2">Multi-pass membrane protein</topology>
    </subcellularLocation>
    <subcellularLocation>
        <location evidence="6">Cytoplasmic vesicle</location>
        <location evidence="6">Secretory vesicle membrane</location>
        <topology evidence="2">Multi-pass membrane protein</topology>
    </subcellularLocation>
    <subcellularLocation>
        <location evidence="1">Lysosome membrane</location>
        <topology evidence="2">Multi-pass membrane protein</topology>
    </subcellularLocation>
    <text evidence="6">Localizes to mucin granules and vesicles.</text>
</comment>
<comment type="alternative products">
    <event type="alternative splicing"/>
    <isoform>
        <id>Q9BYT1-1</id>
        <name>1</name>
        <name evidence="12">VNUT-1</name>
        <sequence type="displayed"/>
    </isoform>
    <isoform>
        <id>Q9BYT1-2</id>
        <name>2</name>
        <name evidence="12">VNUT-2</name>
        <sequence type="described" ref="VSP_010344"/>
    </isoform>
    <isoform>
        <id>Q9BYT1-3</id>
        <name>3</name>
        <sequence type="described" ref="VSP_010345 VSP_010346"/>
    </isoform>
</comment>
<comment type="tissue specificity">
    <text evidence="5">Widely expressed, but more predominantly in adrenal gland, brain and thyroid.</text>
</comment>
<comment type="disease" evidence="7">
    <disease id="DI-04250">
        <name>Porokeratosis 8, disseminated superficial actinic type</name>
        <acronym>POROK8</acronym>
        <description>A form of porokeratosis, a disorder of faulty keratinization characterized by one or more atrophic patches surrounded by a distinctive hyperkeratotic ridgelike border called the cornoid lamella. The keratotic lesions can progress to overt cutaneous neoplasms, typically squamous cell carcinomas. Multiple clinical variants of porokeratosis are recognized, including porokeratosis of Mibelli, linear porokeratosis, disseminated superficial actinic porokeratosis, palmoplantar porokeratosis, and punctate porokeratosis. Disseminated superficial actinic porokeratosis (DSAP) is the most common subtype. It is characterized by multiple small, annular, anhidrotic, keratotic lesions that are located predominantly on sun-exposed areas of the skin, such as the face, neck, and distal limbs. The lesions typically begin to develop in adolescence and reach near-complete penetrance by the third or fourth decade of life.</description>
        <dbReference type="MIM" id="616063"/>
    </disease>
    <text>The disease is caused by variants affecting the gene represented in this entry.</text>
</comment>
<comment type="similarity">
    <text evidence="13">Belongs to the major facilitator superfamily. Sodium/anion cotransporter family.</text>
</comment>
<comment type="sequence caution" evidence="13">
    <conflict type="erroneous termination">
        <sequence resource="EMBL-CDS" id="AAH25312"/>
    </conflict>
    <text>Truncated C-terminus.</text>
</comment>
<comment type="sequence caution" evidence="13">
    <conflict type="erroneous initiation">
        <sequence resource="EMBL-CDS" id="BAB84933"/>
    </conflict>
</comment>
<keyword id="KW-0025">Alternative splicing</keyword>
<keyword id="KW-0968">Cytoplasmic vesicle</keyword>
<keyword id="KW-0225">Disease variant</keyword>
<keyword id="KW-0458">Lysosome</keyword>
<keyword id="KW-0472">Membrane</keyword>
<keyword id="KW-1267">Proteomics identification</keyword>
<keyword id="KW-1185">Reference proteome</keyword>
<keyword id="KW-0812">Transmembrane</keyword>
<keyword id="KW-1133">Transmembrane helix</keyword>
<keyword id="KW-0813">Transport</keyword>